<dbReference type="EMBL" id="AK013494">
    <property type="protein sequence ID" value="BAB28880.1"/>
    <property type="molecule type" value="mRNA"/>
</dbReference>
<dbReference type="EMBL" id="AK133381">
    <property type="protein sequence ID" value="BAE21625.1"/>
    <property type="molecule type" value="mRNA"/>
</dbReference>
<dbReference type="EMBL" id="BC151099">
    <property type="protein sequence ID" value="AAI51100.1"/>
    <property type="molecule type" value="mRNA"/>
</dbReference>
<dbReference type="EMBL" id="BC151103">
    <property type="protein sequence ID" value="AAI51104.1"/>
    <property type="molecule type" value="mRNA"/>
</dbReference>
<dbReference type="CCDS" id="CCDS36492.1"/>
<dbReference type="RefSeq" id="NP_082653.2">
    <property type="nucleotide sequence ID" value="NM_028377.3"/>
</dbReference>
<dbReference type="SMR" id="Q3V079"/>
<dbReference type="FunCoup" id="Q3V079">
    <property type="interactions" value="11"/>
</dbReference>
<dbReference type="STRING" id="10090.ENSMUSP00000080512"/>
<dbReference type="iPTMnet" id="Q3V079"/>
<dbReference type="PhosphoSitePlus" id="Q3V079"/>
<dbReference type="jPOST" id="Q3V079"/>
<dbReference type="PaxDb" id="10090-ENSMUSP00000080512"/>
<dbReference type="PeptideAtlas" id="Q3V079"/>
<dbReference type="ProteomicsDB" id="273464"/>
<dbReference type="Antibodypedia" id="156">
    <property type="antibodies" value="34 antibodies from 13 providers"/>
</dbReference>
<dbReference type="DNASU" id="72873"/>
<dbReference type="Ensembl" id="ENSMUST00000081828.13">
    <property type="protein sequence ID" value="ENSMUSP00000080512.7"/>
    <property type="gene ID" value="ENSMUSG00000057265.14"/>
</dbReference>
<dbReference type="GeneID" id="72873"/>
<dbReference type="KEGG" id="mmu:72873"/>
<dbReference type="UCSC" id="uc007ofi.2">
    <property type="organism name" value="mouse"/>
</dbReference>
<dbReference type="AGR" id="MGI:1920123"/>
<dbReference type="CTD" id="80127"/>
<dbReference type="MGI" id="MGI:1920123">
    <property type="gene designation" value="Bbof1"/>
</dbReference>
<dbReference type="VEuPathDB" id="HostDB:ENSMUSG00000057265"/>
<dbReference type="eggNOG" id="ENOG502QRCW">
    <property type="taxonomic scope" value="Eukaryota"/>
</dbReference>
<dbReference type="GeneTree" id="ENSGT00940000154427"/>
<dbReference type="HOGENOM" id="CLU_032853_0_0_1"/>
<dbReference type="InParanoid" id="Q3V079"/>
<dbReference type="OMA" id="MEADKWT"/>
<dbReference type="OrthoDB" id="441129at2759"/>
<dbReference type="PhylomeDB" id="Q3V079"/>
<dbReference type="TreeFam" id="TF329828"/>
<dbReference type="BioGRID-ORCS" id="72873">
    <property type="hits" value="0 hits in 45 CRISPR screens"/>
</dbReference>
<dbReference type="ChiTaRS" id="Bbof1">
    <property type="organism name" value="mouse"/>
</dbReference>
<dbReference type="PRO" id="PR:Q3V079"/>
<dbReference type="Proteomes" id="UP000000589">
    <property type="component" value="Chromosome 12"/>
</dbReference>
<dbReference type="RNAct" id="Q3V079">
    <property type="molecule type" value="protein"/>
</dbReference>
<dbReference type="Bgee" id="ENSMUSG00000057265">
    <property type="expression patterns" value="Expressed in seminiferous tubule of testis and 159 other cell types or tissues"/>
</dbReference>
<dbReference type="ExpressionAtlas" id="Q3V079">
    <property type="expression patterns" value="baseline and differential"/>
</dbReference>
<dbReference type="GO" id="GO:0005930">
    <property type="term" value="C:axoneme"/>
    <property type="evidence" value="ECO:0000314"/>
    <property type="project" value="UniProtKB"/>
</dbReference>
<dbReference type="GO" id="GO:0036064">
    <property type="term" value="C:ciliary basal body"/>
    <property type="evidence" value="ECO:0000250"/>
    <property type="project" value="UniProtKB"/>
</dbReference>
<dbReference type="GO" id="GO:0036126">
    <property type="term" value="C:sperm flagellum"/>
    <property type="evidence" value="ECO:0000314"/>
    <property type="project" value="UniProtKB"/>
</dbReference>
<dbReference type="GO" id="GO:0060294">
    <property type="term" value="P:cilium movement involved in cell motility"/>
    <property type="evidence" value="ECO:0000315"/>
    <property type="project" value="MGI"/>
</dbReference>
<dbReference type="GO" id="GO:0030317">
    <property type="term" value="P:flagellated sperm motility"/>
    <property type="evidence" value="ECO:0000315"/>
    <property type="project" value="UniProtKB"/>
</dbReference>
<dbReference type="GO" id="GO:0044458">
    <property type="term" value="P:motile cilium assembly"/>
    <property type="evidence" value="ECO:0000250"/>
    <property type="project" value="UniProtKB"/>
</dbReference>
<dbReference type="GO" id="GO:0007026">
    <property type="term" value="P:negative regulation of microtubule depolymerization"/>
    <property type="evidence" value="ECO:0000315"/>
    <property type="project" value="MGI"/>
</dbReference>
<dbReference type="GO" id="GO:0050821">
    <property type="term" value="P:protein stabilization"/>
    <property type="evidence" value="ECO:0000315"/>
    <property type="project" value="MGI"/>
</dbReference>
<dbReference type="GO" id="GO:0007338">
    <property type="term" value="P:single fertilization"/>
    <property type="evidence" value="ECO:0000315"/>
    <property type="project" value="MGI"/>
</dbReference>
<dbReference type="GO" id="GO:0007288">
    <property type="term" value="P:sperm axoneme assembly"/>
    <property type="evidence" value="ECO:0000315"/>
    <property type="project" value="UniProtKB"/>
</dbReference>
<dbReference type="InterPro" id="IPR032777">
    <property type="entry name" value="DUF4515"/>
</dbReference>
<dbReference type="PANTHER" id="PTHR14845:SF5">
    <property type="entry name" value="BASAL BODY-ORIENTATION FACTOR 1"/>
    <property type="match status" value="1"/>
</dbReference>
<dbReference type="PANTHER" id="PTHR14845">
    <property type="entry name" value="COILED-COIL DOMAIN-CONTAINING 166"/>
    <property type="match status" value="1"/>
</dbReference>
<dbReference type="Pfam" id="PF14988">
    <property type="entry name" value="DUF4515"/>
    <property type="match status" value="1"/>
</dbReference>
<protein>
    <recommendedName>
        <fullName evidence="2">Basal body-orientation factor 1</fullName>
    </recommendedName>
    <alternativeName>
        <fullName>Coiled-coil domain-containing protein 176</fullName>
    </alternativeName>
</protein>
<proteinExistence type="evidence at protein level"/>
<accession>Q3V079</accession>
<accession>B9EKT3</accession>
<accession>Q9CUZ3</accession>
<feature type="chain" id="PRO_0000281125" description="Basal body-orientation factor 1">
    <location>
        <begin position="1"/>
        <end position="533"/>
    </location>
</feature>
<feature type="region of interest" description="Disordered" evidence="4">
    <location>
        <begin position="1"/>
        <end position="30"/>
    </location>
</feature>
<feature type="region of interest" description="Interaction with MNS1 and ODF2" evidence="5">
    <location>
        <begin position="277"/>
        <end position="533"/>
    </location>
</feature>
<feature type="region of interest" description="Disordered" evidence="4">
    <location>
        <begin position="507"/>
        <end position="533"/>
    </location>
</feature>
<feature type="coiled-coil region" evidence="3">
    <location>
        <begin position="34"/>
        <end position="207"/>
    </location>
</feature>
<feature type="coiled-coil region" evidence="3">
    <location>
        <begin position="246"/>
        <end position="368"/>
    </location>
</feature>
<feature type="compositionally biased region" description="Basic residues" evidence="4">
    <location>
        <begin position="7"/>
        <end position="19"/>
    </location>
</feature>
<feature type="compositionally biased region" description="Basic and acidic residues" evidence="4">
    <location>
        <begin position="20"/>
        <end position="30"/>
    </location>
</feature>
<feature type="compositionally biased region" description="Polar residues" evidence="4">
    <location>
        <begin position="507"/>
        <end position="517"/>
    </location>
</feature>
<feature type="sequence conflict" description="In Ref. 1; BAE21625." evidence="6" ref="1">
    <original>I</original>
    <variation>M</variation>
    <location>
        <position position="163"/>
    </location>
</feature>
<organism>
    <name type="scientific">Mus musculus</name>
    <name type="common">Mouse</name>
    <dbReference type="NCBI Taxonomy" id="10090"/>
    <lineage>
        <taxon>Eukaryota</taxon>
        <taxon>Metazoa</taxon>
        <taxon>Chordata</taxon>
        <taxon>Craniata</taxon>
        <taxon>Vertebrata</taxon>
        <taxon>Euteleostomi</taxon>
        <taxon>Mammalia</taxon>
        <taxon>Eutheria</taxon>
        <taxon>Euarchontoglires</taxon>
        <taxon>Glires</taxon>
        <taxon>Rodentia</taxon>
        <taxon>Myomorpha</taxon>
        <taxon>Muroidea</taxon>
        <taxon>Muridae</taxon>
        <taxon>Murinae</taxon>
        <taxon>Mus</taxon>
        <taxon>Mus</taxon>
    </lineage>
</organism>
<keyword id="KW-0966">Cell projection</keyword>
<keyword id="KW-0969">Cilium</keyword>
<keyword id="KW-0175">Coiled coil</keyword>
<keyword id="KW-0963">Cytoplasm</keyword>
<keyword id="KW-0206">Cytoskeleton</keyword>
<keyword id="KW-0282">Flagellum</keyword>
<keyword id="KW-1185">Reference proteome</keyword>
<reference key="1">
    <citation type="journal article" date="2005" name="Science">
        <title>The transcriptional landscape of the mammalian genome.</title>
        <authorList>
            <person name="Carninci P."/>
            <person name="Kasukawa T."/>
            <person name="Katayama S."/>
            <person name="Gough J."/>
            <person name="Frith M.C."/>
            <person name="Maeda N."/>
            <person name="Oyama R."/>
            <person name="Ravasi T."/>
            <person name="Lenhard B."/>
            <person name="Wells C."/>
            <person name="Kodzius R."/>
            <person name="Shimokawa K."/>
            <person name="Bajic V.B."/>
            <person name="Brenner S.E."/>
            <person name="Batalov S."/>
            <person name="Forrest A.R."/>
            <person name="Zavolan M."/>
            <person name="Davis M.J."/>
            <person name="Wilming L.G."/>
            <person name="Aidinis V."/>
            <person name="Allen J.E."/>
            <person name="Ambesi-Impiombato A."/>
            <person name="Apweiler R."/>
            <person name="Aturaliya R.N."/>
            <person name="Bailey T.L."/>
            <person name="Bansal M."/>
            <person name="Baxter L."/>
            <person name="Beisel K.W."/>
            <person name="Bersano T."/>
            <person name="Bono H."/>
            <person name="Chalk A.M."/>
            <person name="Chiu K.P."/>
            <person name="Choudhary V."/>
            <person name="Christoffels A."/>
            <person name="Clutterbuck D.R."/>
            <person name="Crowe M.L."/>
            <person name="Dalla E."/>
            <person name="Dalrymple B.P."/>
            <person name="de Bono B."/>
            <person name="Della Gatta G."/>
            <person name="di Bernardo D."/>
            <person name="Down T."/>
            <person name="Engstrom P."/>
            <person name="Fagiolini M."/>
            <person name="Faulkner G."/>
            <person name="Fletcher C.F."/>
            <person name="Fukushima T."/>
            <person name="Furuno M."/>
            <person name="Futaki S."/>
            <person name="Gariboldi M."/>
            <person name="Georgii-Hemming P."/>
            <person name="Gingeras T.R."/>
            <person name="Gojobori T."/>
            <person name="Green R.E."/>
            <person name="Gustincich S."/>
            <person name="Harbers M."/>
            <person name="Hayashi Y."/>
            <person name="Hensch T.K."/>
            <person name="Hirokawa N."/>
            <person name="Hill D."/>
            <person name="Huminiecki L."/>
            <person name="Iacono M."/>
            <person name="Ikeo K."/>
            <person name="Iwama A."/>
            <person name="Ishikawa T."/>
            <person name="Jakt M."/>
            <person name="Kanapin A."/>
            <person name="Katoh M."/>
            <person name="Kawasawa Y."/>
            <person name="Kelso J."/>
            <person name="Kitamura H."/>
            <person name="Kitano H."/>
            <person name="Kollias G."/>
            <person name="Krishnan S.P."/>
            <person name="Kruger A."/>
            <person name="Kummerfeld S.K."/>
            <person name="Kurochkin I.V."/>
            <person name="Lareau L.F."/>
            <person name="Lazarevic D."/>
            <person name="Lipovich L."/>
            <person name="Liu J."/>
            <person name="Liuni S."/>
            <person name="McWilliam S."/>
            <person name="Madan Babu M."/>
            <person name="Madera M."/>
            <person name="Marchionni L."/>
            <person name="Matsuda H."/>
            <person name="Matsuzawa S."/>
            <person name="Miki H."/>
            <person name="Mignone F."/>
            <person name="Miyake S."/>
            <person name="Morris K."/>
            <person name="Mottagui-Tabar S."/>
            <person name="Mulder N."/>
            <person name="Nakano N."/>
            <person name="Nakauchi H."/>
            <person name="Ng P."/>
            <person name="Nilsson R."/>
            <person name="Nishiguchi S."/>
            <person name="Nishikawa S."/>
            <person name="Nori F."/>
            <person name="Ohara O."/>
            <person name="Okazaki Y."/>
            <person name="Orlando V."/>
            <person name="Pang K.C."/>
            <person name="Pavan W.J."/>
            <person name="Pavesi G."/>
            <person name="Pesole G."/>
            <person name="Petrovsky N."/>
            <person name="Piazza S."/>
            <person name="Reed J."/>
            <person name="Reid J.F."/>
            <person name="Ring B.Z."/>
            <person name="Ringwald M."/>
            <person name="Rost B."/>
            <person name="Ruan Y."/>
            <person name="Salzberg S.L."/>
            <person name="Sandelin A."/>
            <person name="Schneider C."/>
            <person name="Schoenbach C."/>
            <person name="Sekiguchi K."/>
            <person name="Semple C.A."/>
            <person name="Seno S."/>
            <person name="Sessa L."/>
            <person name="Sheng Y."/>
            <person name="Shibata Y."/>
            <person name="Shimada H."/>
            <person name="Shimada K."/>
            <person name="Silva D."/>
            <person name="Sinclair B."/>
            <person name="Sperling S."/>
            <person name="Stupka E."/>
            <person name="Sugiura K."/>
            <person name="Sultana R."/>
            <person name="Takenaka Y."/>
            <person name="Taki K."/>
            <person name="Tammoja K."/>
            <person name="Tan S.L."/>
            <person name="Tang S."/>
            <person name="Taylor M.S."/>
            <person name="Tegner J."/>
            <person name="Teichmann S.A."/>
            <person name="Ueda H.R."/>
            <person name="van Nimwegen E."/>
            <person name="Verardo R."/>
            <person name="Wei C.L."/>
            <person name="Yagi K."/>
            <person name="Yamanishi H."/>
            <person name="Zabarovsky E."/>
            <person name="Zhu S."/>
            <person name="Zimmer A."/>
            <person name="Hide W."/>
            <person name="Bult C."/>
            <person name="Grimmond S.M."/>
            <person name="Teasdale R.D."/>
            <person name="Liu E.T."/>
            <person name="Brusic V."/>
            <person name="Quackenbush J."/>
            <person name="Wahlestedt C."/>
            <person name="Mattick J.S."/>
            <person name="Hume D.A."/>
            <person name="Kai C."/>
            <person name="Sasaki D."/>
            <person name="Tomaru Y."/>
            <person name="Fukuda S."/>
            <person name="Kanamori-Katayama M."/>
            <person name="Suzuki M."/>
            <person name="Aoki J."/>
            <person name="Arakawa T."/>
            <person name="Iida J."/>
            <person name="Imamura K."/>
            <person name="Itoh M."/>
            <person name="Kato T."/>
            <person name="Kawaji H."/>
            <person name="Kawagashira N."/>
            <person name="Kawashima T."/>
            <person name="Kojima M."/>
            <person name="Kondo S."/>
            <person name="Konno H."/>
            <person name="Nakano K."/>
            <person name="Ninomiya N."/>
            <person name="Nishio T."/>
            <person name="Okada M."/>
            <person name="Plessy C."/>
            <person name="Shibata K."/>
            <person name="Shiraki T."/>
            <person name="Suzuki S."/>
            <person name="Tagami M."/>
            <person name="Waki K."/>
            <person name="Watahiki A."/>
            <person name="Okamura-Oho Y."/>
            <person name="Suzuki H."/>
            <person name="Kawai J."/>
            <person name="Hayashizaki Y."/>
        </authorList>
    </citation>
    <scope>NUCLEOTIDE SEQUENCE [LARGE SCALE MRNA]</scope>
    <source>
        <strain>C57BL/6J</strain>
        <tissue>Hippocampus</tissue>
        <tissue>Testis</tissue>
    </source>
</reference>
<reference key="2">
    <citation type="journal article" date="2004" name="Genome Res.">
        <title>The status, quality, and expansion of the NIH full-length cDNA project: the Mammalian Gene Collection (MGC).</title>
        <authorList>
            <consortium name="The MGC Project Team"/>
        </authorList>
    </citation>
    <scope>NUCLEOTIDE SEQUENCE [LARGE SCALE MRNA]</scope>
    <source>
        <tissue>Brain</tissue>
    </source>
</reference>
<reference key="3">
    <citation type="journal article" date="2023" name="Cell. Mol. Life Sci.">
        <title>BBOF1 is required for sperm motility and male fertility by stabilizing the flagellar axoneme in mice.</title>
        <authorList>
            <person name="Cao H."/>
            <person name="Xu H."/>
            <person name="Zhou Y."/>
            <person name="Xu W."/>
            <person name="Lu Q."/>
            <person name="Jiang L."/>
            <person name="Rong Y."/>
            <person name="Zhang Q."/>
            <person name="Yu C."/>
        </authorList>
    </citation>
    <scope>FUNCTION</scope>
    <scope>SUBCELLULAR LOCATION</scope>
    <scope>TISSUE SPECIFICITY</scope>
    <scope>DEVELOPMENTAL STAGE</scope>
    <scope>DISRUPTION PHENOTYPE</scope>
    <scope>INTERACTION WITH MNS1 AND ODF2</scope>
</reference>
<sequence>MPAKDKRKDKRKDKRKGKNKGKEPKKIIKSDEPAIERAKANASLWEARLEVTELSRIEYRDTSRRLAKNNEDLKKQQYNMEKDIMSVLSYLKKQDQEKDNMIEKLKQQLAKTKEKAQEEKEKLEQKYALQVSELEGQFHQKAKEIGMIQTELKTIKQFQKRKIQVEKELDDLKENLRNSEKNYQETLRRLESRFFEEKHRLEQEAEKRIIMLAERAHHEAVVQLNTAGRNVFKENVYLHKALAYHLKEAEILQQNSKKIEENHSCLLQQKEINDLLVKEKIMQLTQQKSQIQTLQKKVVSLENALTYMTTEFEAEVLKLQQKAIIENQAGLVEIDKLQQLLQMKDREMNRVKRLAKNILDERTEVEQFFLDALYEVKQQILASRKHYKQIAQAAFNLKMRAACAGKTEYPRIRTFDGKEQSTNSVNQDLLEAEKWPTTQKNVDIRDLTWEQKEKVLRLLFAKMNGFAARKYSQSSKPPVPDHIIYGSGEMKETGDENNLLDQTFITQQAPVSDSNRMVSPDVIPQGLQDSDIA</sequence>
<gene>
    <name evidence="2" type="primary">Bbof1</name>
    <name type="synonym">Ccdc176</name>
</gene>
<evidence type="ECO:0000250" key="1">
    <source>
        <dbReference type="UniProtKB" id="A0JMY4"/>
    </source>
</evidence>
<evidence type="ECO:0000250" key="2">
    <source>
        <dbReference type="UniProtKB" id="Q8ND07"/>
    </source>
</evidence>
<evidence type="ECO:0000255" key="3"/>
<evidence type="ECO:0000256" key="4">
    <source>
        <dbReference type="SAM" id="MobiDB-lite"/>
    </source>
</evidence>
<evidence type="ECO:0000269" key="5">
    <source>
    </source>
</evidence>
<evidence type="ECO:0000305" key="6"/>
<comment type="function">
    <text evidence="5">Plays an essential role in sperm motility and male fertility by stabilizing the sperm flagellar axonemal structure. May be required for the stability of ODF2 and MANS1 proteins. Dispensable for the assembly and function of motile cilia.</text>
</comment>
<comment type="subunit">
    <text evidence="5">Interacts with MNS1 and ODF2.</text>
</comment>
<comment type="subcellular location">
    <subcellularLocation>
        <location evidence="1">Cytoplasm</location>
        <location evidence="1">Cytoskeleton</location>
        <location evidence="1">Cilium basal body</location>
    </subcellularLocation>
    <subcellularLocation>
        <location evidence="5">Cytoplasm</location>
        <location evidence="5">Cytoskeleton</location>
        <location evidence="5">Flagellum axoneme</location>
    </subcellularLocation>
    <text evidence="1">Localizes to a polar structure adjacent to the basal body.</text>
</comment>
<comment type="tissue specificity">
    <text evidence="5">Expressed exclusively in the testis and predominantly expressed in male germ cells.</text>
</comment>
<comment type="developmental stage">
    <text evidence="5">First detected at PD16 (postnatal day 16), when the first wave of spermatocytes enter the pachytene stage, and expression increases with testis development from PD18 to PD69.</text>
</comment>
<comment type="disruption phenotype">
    <text evidence="5">Mice show reduced sperm motility and male subfertility without obvious sperm morphological defects. Abnormalities in sperm flagellar axoneme seen, with an absence of one to three microtubule doublets in the principal piece and end piece of the sperm flagellum. Motile cilia are normally distributed on the epithelial cells of the trachea and the axonemal structure of cilia is intact.</text>
</comment>
<comment type="similarity">
    <text evidence="6">Belongs to the BBOF1 family.</text>
</comment>
<name>BBOF1_MOUSE</name>